<name>CHS4_EXODN</name>
<feature type="chain" id="PRO_0000460789" description="Chitin synthase 4">
    <location>
        <begin position="1"/>
        <end position="1218"/>
    </location>
</feature>
<feature type="transmembrane region" description="Helical" evidence="1">
    <location>
        <begin position="200"/>
        <end position="220"/>
    </location>
</feature>
<feature type="transmembrane region" description="Helical" evidence="1">
    <location>
        <begin position="235"/>
        <end position="255"/>
    </location>
</feature>
<feature type="transmembrane region" description="Helical" evidence="1">
    <location>
        <begin position="487"/>
        <end position="507"/>
    </location>
</feature>
<feature type="transmembrane region" description="Helical" evidence="1">
    <location>
        <begin position="1062"/>
        <end position="1082"/>
    </location>
</feature>
<feature type="transmembrane region" description="Helical" evidence="1">
    <location>
        <begin position="1087"/>
        <end position="1107"/>
    </location>
</feature>
<feature type="transmembrane region" description="Helical" evidence="1">
    <location>
        <begin position="1115"/>
        <end position="1135"/>
    </location>
</feature>
<feature type="region of interest" description="Disordered" evidence="3">
    <location>
        <begin position="1"/>
        <end position="93"/>
    </location>
</feature>
<feature type="region of interest" description="Disordered" evidence="3">
    <location>
        <begin position="132"/>
        <end position="190"/>
    </location>
</feature>
<feature type="region of interest" description="Disordered" evidence="3">
    <location>
        <begin position="548"/>
        <end position="570"/>
    </location>
</feature>
<feature type="region of interest" description="Disordered" evidence="3">
    <location>
        <begin position="582"/>
        <end position="606"/>
    </location>
</feature>
<feature type="region of interest" description="Disordered" evidence="3">
    <location>
        <begin position="1188"/>
        <end position="1218"/>
    </location>
</feature>
<feature type="compositionally biased region" description="Basic and acidic residues" evidence="3">
    <location>
        <begin position="14"/>
        <end position="34"/>
    </location>
</feature>
<feature type="compositionally biased region" description="Polar residues" evidence="3">
    <location>
        <begin position="71"/>
        <end position="80"/>
    </location>
</feature>
<feature type="compositionally biased region" description="Polar residues" evidence="3">
    <location>
        <begin position="133"/>
        <end position="142"/>
    </location>
</feature>
<feature type="compositionally biased region" description="Basic and acidic residues" evidence="3">
    <location>
        <begin position="175"/>
        <end position="190"/>
    </location>
</feature>
<feature type="compositionally biased region" description="Polar residues" evidence="3">
    <location>
        <begin position="553"/>
        <end position="562"/>
    </location>
</feature>
<feature type="compositionally biased region" description="Polar residues" evidence="3">
    <location>
        <begin position="1189"/>
        <end position="1198"/>
    </location>
</feature>
<feature type="glycosylation site" description="N-linked (GlcNAc...) asparagine" evidence="2">
    <location>
        <position position="50"/>
    </location>
</feature>
<feature type="glycosylation site" description="N-linked (GlcNAc...) asparagine" evidence="2">
    <location>
        <position position="180"/>
    </location>
</feature>
<feature type="glycosylation site" description="N-linked (GlcNAc...) asparagine" evidence="2">
    <location>
        <position position="365"/>
    </location>
</feature>
<feature type="glycosylation site" description="N-linked (GlcNAc...) asparagine" evidence="2">
    <location>
        <position position="404"/>
    </location>
</feature>
<feature type="glycosylation site" description="N-linked (GlcNAc...) asparagine" evidence="2">
    <location>
        <position position="426"/>
    </location>
</feature>
<feature type="glycosylation site" description="N-linked (GlcNAc...) asparagine" evidence="2">
    <location>
        <position position="617"/>
    </location>
</feature>
<feature type="glycosylation site" description="N-linked (GlcNAc...) asparagine" evidence="2">
    <location>
        <position position="903"/>
    </location>
</feature>
<feature type="glycosylation site" description="N-linked (GlcNAc...) asparagine" evidence="2">
    <location>
        <position position="1030"/>
    </location>
</feature>
<feature type="glycosylation site" description="N-linked (GlcNAc...) asparagine" evidence="2">
    <location>
        <position position="1190"/>
    </location>
</feature>
<comment type="function">
    <text evidence="4">Polymerizes chitin, a structural polymer of the cell wall and septum, by transferring the sugar moiety of UDP-GlcNAc to the non-reducing end of the growing chitin polymer (PubMed:10569783). CHS4 synthesizes a large amount of chitin and appears to play a role in the process of cell separation (PubMed:10569783). CHS4 is particularly well suited for functioning at the higher temperatures associated with its poorly characterized saprophic environment and with human infection (PubMed:10569783).</text>
</comment>
<comment type="catalytic activity">
    <reaction evidence="4">
        <text>[(1-&gt;4)-N-acetyl-beta-D-glucosaminyl](n) + UDP-N-acetyl-alpha-D-glucosamine = [(1-&gt;4)-N-acetyl-beta-D-glucosaminyl](n+1) + UDP + H(+)</text>
        <dbReference type="Rhea" id="RHEA:16637"/>
        <dbReference type="Rhea" id="RHEA-COMP:9593"/>
        <dbReference type="Rhea" id="RHEA-COMP:9595"/>
        <dbReference type="ChEBI" id="CHEBI:15378"/>
        <dbReference type="ChEBI" id="CHEBI:17029"/>
        <dbReference type="ChEBI" id="CHEBI:57705"/>
        <dbReference type="ChEBI" id="CHEBI:58223"/>
        <dbReference type="EC" id="2.4.1.16"/>
    </reaction>
    <physiologicalReaction direction="left-to-right" evidence="4">
        <dbReference type="Rhea" id="RHEA:16638"/>
    </physiologicalReaction>
</comment>
<comment type="activity regulation">
    <text evidence="4">Activity is stimulated by Mg(2+), and is more inhibited by polyoxin D than by nikkomycin.</text>
</comment>
<comment type="biophysicochemical properties">
    <phDependence>
        <text evidence="4">Optimum pH is 7.5.</text>
    </phDependence>
    <temperatureDependence>
        <text evidence="4">Optimum temperature is from 30 to 45 degrees Celsius.</text>
    </temperatureDependence>
</comment>
<comment type="subcellular location">
    <subcellularLocation>
        <location evidence="7">Cell membrane</location>
        <topology evidence="1">Multi-pass membrane protein</topology>
    </subcellularLocation>
</comment>
<comment type="induction">
    <text evidence="5">Expression is increased in cells shifted from 25 degrees Celsius to 37 degrees Celsius.</text>
</comment>
<comment type="PTM">
    <text evidence="4">Maximal activity requires trypsin activation, suggesting a zymogenic nature.</text>
</comment>
<comment type="disruption phenotype">
    <text evidence="4 5">Leads to reduced chitin content, abnormal yeast clumpiness and budding kinetics, and increased melanin secretion (PubMed:10569783). Does not affect virulence in an acute mouse model (PubMed:10569783). Also leads to increased expression of the other chitin synthase genes for compensation (PubMed:12213927).</text>
</comment>
<comment type="similarity">
    <text evidence="7">Belongs to the chitin synthase family. Class IV subfamily.</text>
</comment>
<organism>
    <name type="scientific">Exophiala dermatitidis (strain ATCC 34100 / CBS 525.76 / NIH/UT8656)</name>
    <name type="common">Black yeast</name>
    <name type="synonym">Wangiella dermatitidis</name>
    <dbReference type="NCBI Taxonomy" id="858893"/>
    <lineage>
        <taxon>Eukaryota</taxon>
        <taxon>Fungi</taxon>
        <taxon>Dikarya</taxon>
        <taxon>Ascomycota</taxon>
        <taxon>Pezizomycotina</taxon>
        <taxon>Eurotiomycetes</taxon>
        <taxon>Chaetothyriomycetidae</taxon>
        <taxon>Chaetothyriales</taxon>
        <taxon>Herpotrichiellaceae</taxon>
        <taxon>Exophiala</taxon>
    </lineage>
</organism>
<protein>
    <recommendedName>
        <fullName evidence="6">Chitin synthase 4</fullName>
        <ecNumber evidence="4">2.4.1.16</ecNumber>
    </recommendedName>
    <alternativeName>
        <fullName evidence="7">Chitin-UDP acetyl-glucosaminyl transferase 4</fullName>
    </alternativeName>
    <alternativeName>
        <fullName evidence="6">Class-IV chitin synthase 4</fullName>
    </alternativeName>
</protein>
<reference key="1">
    <citation type="submission" date="2011-07" db="EMBL/GenBank/DDBJ databases">
        <title>The Genome Sequence of Exophiala (Wangiella) dermatitidis NIH/UT8656.</title>
        <authorList>
            <consortium name="The Broad Institute Genome Sequencing Platform"/>
            <person name="Cuomo C."/>
            <person name="Wang Z."/>
            <person name="Hunicke-Smith S."/>
            <person name="Szanislo P.J."/>
            <person name="Earl A."/>
            <person name="Young S.K."/>
            <person name="Zeng Q."/>
            <person name="Gargeya S."/>
            <person name="Fitzgerald M."/>
            <person name="Haas B."/>
            <person name="Abouelleil A."/>
            <person name="Alvarado L."/>
            <person name="Arachchi H.M."/>
            <person name="Berlin A."/>
            <person name="Brown A."/>
            <person name="Chapman S.B."/>
            <person name="Chen Z."/>
            <person name="Dunbar C."/>
            <person name="Freedman E."/>
            <person name="Gearin G."/>
            <person name="Gellesch M."/>
            <person name="Goldberg J."/>
            <person name="Griggs A."/>
            <person name="Gujja S."/>
            <person name="Heiman D."/>
            <person name="Howarth C."/>
            <person name="Larson L."/>
            <person name="Lui A."/>
            <person name="MacDonald P.J.P."/>
            <person name="Montmayeur A."/>
            <person name="Murphy C."/>
            <person name="Neiman D."/>
            <person name="Pearson M."/>
            <person name="Priest M."/>
            <person name="Roberts A."/>
            <person name="Saif S."/>
            <person name="Shea T."/>
            <person name="Shenoy N."/>
            <person name="Sisk P."/>
            <person name="Stolte C."/>
            <person name="Sykes S."/>
            <person name="Wortman J."/>
            <person name="Nusbaum C."/>
            <person name="Birren B."/>
        </authorList>
    </citation>
    <scope>NUCLEOTIDE SEQUENCE [LARGE SCALE GENOMIC DNA]</scope>
    <source>
        <strain>ATCC 34100 / CBS 525.76 / NIH/UT8656</strain>
    </source>
</reference>
<reference key="2">
    <citation type="journal article" date="1999" name="Infect. Immun.">
        <title>WdChs4p, a homolog of chitin synthase 3 in Saccharomyces cerevisiae, alone cannot support growth of Wangiella (Exophiala) dermatitidis at the temperature of infection.</title>
        <authorList>
            <person name="Wang Z."/>
            <person name="Zheng L."/>
            <person name="Hauser M."/>
            <person name="Becker J.M."/>
            <person name="Szaniszlo P.J."/>
        </authorList>
    </citation>
    <scope>FUNCTION</scope>
    <scope>CATALYTIC ACTIVITY</scope>
    <scope>DISRUPTION PHENOTYPE</scope>
    <scope>ACTIVITY REGULATION</scope>
    <scope>BIOPHYSICOCHEMICAL PROPERTIES</scope>
    <scope>ZYMOGEN</scope>
</reference>
<reference key="3">
    <citation type="journal article" date="2002" name="Microbiology">
        <title>Compensatory expression of five chitin synthase genes, a response to stress stimuli, in Wangiella (Exophiala) dermatitidis, a melanized fungal pathogen of humans.</title>
        <authorList>
            <person name="Wang Q."/>
            <person name="Liu H."/>
            <person name="Szaniszlo P.J."/>
        </authorList>
    </citation>
    <scope>INDUCTION</scope>
    <scope>DISRUPTION PHENOTYPE</scope>
</reference>
<keyword id="KW-1003">Cell membrane</keyword>
<keyword id="KW-0325">Glycoprotein</keyword>
<keyword id="KW-0328">Glycosyltransferase</keyword>
<keyword id="KW-0472">Membrane</keyword>
<keyword id="KW-1185">Reference proteome</keyword>
<keyword id="KW-0808">Transferase</keyword>
<keyword id="KW-0812">Transmembrane</keyword>
<keyword id="KW-1133">Transmembrane helix</keyword>
<dbReference type="EC" id="2.4.1.16" evidence="4"/>
<dbReference type="EMBL" id="JH226135">
    <property type="protein sequence ID" value="EHY59738.1"/>
    <property type="molecule type" value="Genomic_DNA"/>
</dbReference>
<dbReference type="RefSeq" id="XP_009160199.1">
    <property type="nucleotide sequence ID" value="XM_009161951.1"/>
</dbReference>
<dbReference type="FunCoup" id="H6C7U6">
    <property type="interactions" value="64"/>
</dbReference>
<dbReference type="STRING" id="858893.H6C7U6"/>
<dbReference type="GeneID" id="20312360"/>
<dbReference type="VEuPathDB" id="FungiDB:HMPREF1120_07721"/>
<dbReference type="eggNOG" id="KOG2571">
    <property type="taxonomic scope" value="Eukaryota"/>
</dbReference>
<dbReference type="HOGENOM" id="CLU_002572_1_0_1"/>
<dbReference type="InParanoid" id="H6C7U6"/>
<dbReference type="OMA" id="DIMGLCG"/>
<dbReference type="OrthoDB" id="4828at5583"/>
<dbReference type="Proteomes" id="UP000007304">
    <property type="component" value="Unassembled WGS sequence"/>
</dbReference>
<dbReference type="GO" id="GO:0030428">
    <property type="term" value="C:cell septum"/>
    <property type="evidence" value="ECO:0007669"/>
    <property type="project" value="TreeGrafter"/>
</dbReference>
<dbReference type="GO" id="GO:0005886">
    <property type="term" value="C:plasma membrane"/>
    <property type="evidence" value="ECO:0007669"/>
    <property type="project" value="UniProtKB-SubCell"/>
</dbReference>
<dbReference type="GO" id="GO:0004100">
    <property type="term" value="F:chitin synthase activity"/>
    <property type="evidence" value="ECO:0007669"/>
    <property type="project" value="UniProtKB-EC"/>
</dbReference>
<dbReference type="GO" id="GO:0006031">
    <property type="term" value="P:chitin biosynthetic process"/>
    <property type="evidence" value="ECO:0007669"/>
    <property type="project" value="TreeGrafter"/>
</dbReference>
<dbReference type="CDD" id="cd04190">
    <property type="entry name" value="Chitin_synth_C"/>
    <property type="match status" value="1"/>
</dbReference>
<dbReference type="InterPro" id="IPR004835">
    <property type="entry name" value="Chitin_synth"/>
</dbReference>
<dbReference type="InterPro" id="IPR054295">
    <property type="entry name" value="CHS4-like_dom"/>
</dbReference>
<dbReference type="InterPro" id="IPR029044">
    <property type="entry name" value="Nucleotide-diphossugar_trans"/>
</dbReference>
<dbReference type="PANTHER" id="PTHR22914">
    <property type="entry name" value="CHITIN SYNTHASE"/>
    <property type="match status" value="1"/>
</dbReference>
<dbReference type="PANTHER" id="PTHR22914:SF16">
    <property type="entry name" value="CHITIN SYNTHASE 3"/>
    <property type="match status" value="1"/>
</dbReference>
<dbReference type="Pfam" id="PF03142">
    <property type="entry name" value="Chitin_synth_2"/>
    <property type="match status" value="1"/>
</dbReference>
<dbReference type="Pfam" id="PF22997">
    <property type="entry name" value="CHS4"/>
    <property type="match status" value="1"/>
</dbReference>
<dbReference type="SUPFAM" id="SSF53448">
    <property type="entry name" value="Nucleotide-diphospho-sugar transferases"/>
    <property type="match status" value="1"/>
</dbReference>
<accession>H6C7U6</accession>
<proteinExistence type="evidence at protein level"/>
<evidence type="ECO:0000255" key="1"/>
<evidence type="ECO:0000255" key="2">
    <source>
        <dbReference type="PROSITE-ProRule" id="PRU00498"/>
    </source>
</evidence>
<evidence type="ECO:0000256" key="3">
    <source>
        <dbReference type="SAM" id="MobiDB-lite"/>
    </source>
</evidence>
<evidence type="ECO:0000269" key="4">
    <source>
    </source>
</evidence>
<evidence type="ECO:0000269" key="5">
    <source>
    </source>
</evidence>
<evidence type="ECO:0000303" key="6">
    <source>
    </source>
</evidence>
<evidence type="ECO:0000305" key="7"/>
<gene>
    <name evidence="6" type="primary">CHS4</name>
    <name type="ORF">HMPREF1120_07721</name>
</gene>
<sequence length="1218" mass="136630">MAEPRMPRPATSPTRDKSHSPYRESPSRRLRDVETGYNPPQNPPYPPQRNGTEPYPPSPSSRTADWEPIMSNPNPMSQSDLGRKKSLIRPERNRIDRDHPNYYYRKHAANMEVLPSTTGNDPVVEDLAEHRTVSSGSTQQDTSIEEEVVGNPQKSRMPGKLEPVGKKKAPRKLVRKDTRNLTEEEKRRQKELDKIKPPSIWNIYCAVVTFWAPDCLLQCFGMPARAQRRAWREKVGLISIILLIAAFVGFLTFGFTQAVCAAPGLRLKINHVDRGYMIFHGGAYNLDGSMHPAARGIPLDANVLYDLPHKYGGQDGSFMFQKVNGACKGLITLAEGSDVPTNSDGDLAWYFPCTAFNQDGSSEVNLTSPYYLGYACHTTAKARNTFYSLKKAGDVYFTWDDIKNKSRNLAVYSGSVVDLDLLKWFNKSQVAWPQQFDDLRENGRVRGMDLTHVLQSATDKQVGRCLTQIAKVGSIDTESVGCIASKVVLYVSLVFILAIVAAKFFLALAFQWFLARRFAAAKTSQTSDPKKRAKQIEDWTDDIYKPAPKITDPASTVTGSDGRTSKRGSMFLPQTSRFTSPYAVDRRSSRPPPTTMTSQSSNAKLLPGGNPYKSGFNSSQNTLDLHSRMSVGASRSSLLLSGQETRYSAVMDNLDPNGPVGFIHENVVPQPPPEWQPFGYPLAHVICLVTAYSEGEDGIRTTLDSIATTDYPNSHKAILVVCDGMIKGKGEAQSTPDIVLGMMGDFVIAPEDVQAFSYVAVSSGAKRHNMAKVYAGFYDYGPKSRIDPTKQQRVPMMVVVKCGTPDEATKSKPGNRGKRDSQIILMSFLQKVMFDERMTELEYEMFNGLWKVTGMSPDFYEMVLMVDADTKVFPDSLTHMVSAMVKDPEIMGLCGETKIANKNASWVSRIQVFEYFISHHLSKSFESVFGGVTCLPGCFCMYRIKSPKGGQNYWVPILANPDIVEHYSENVVDTLHKKNLLLLGEDRYLSTLMLKTFPKRKQVFVPQAVCKTTVPDEFKVLLSQRRRWINSTVHNLMELVLVRDLCGTFCFSMQFVVFIELIGTLVLPAAISFTFYLIIISIVKKPVPVIPLVLLALILGLPAILIVLTAHRWSYILWMGIYLLSLPIWNFVLPAYAFWKFDDFSWGETRKTAGEKTKKAGLEYEGEFDSSKITMKRWGDFERERRAQANGSVWNQQPPTRPPSGYGSMHGFEPYRDY</sequence>